<reference key="1">
    <citation type="journal article" date="2006" name="Genome Biol.">
        <title>Genomic analysis reveals that Pseudomonas aeruginosa virulence is combinatorial.</title>
        <authorList>
            <person name="Lee D.G."/>
            <person name="Urbach J.M."/>
            <person name="Wu G."/>
            <person name="Liberati N.T."/>
            <person name="Feinbaum R.L."/>
            <person name="Miyata S."/>
            <person name="Diggins L.T."/>
            <person name="He J."/>
            <person name="Saucier M."/>
            <person name="Deziel E."/>
            <person name="Friedman L."/>
            <person name="Li L."/>
            <person name="Grills G."/>
            <person name="Montgomery K."/>
            <person name="Kucherlapati R."/>
            <person name="Rahme L.G."/>
            <person name="Ausubel F.M."/>
        </authorList>
    </citation>
    <scope>NUCLEOTIDE SEQUENCE [LARGE SCALE GENOMIC DNA]</scope>
    <source>
        <strain>UCBPP-PA14</strain>
    </source>
</reference>
<evidence type="ECO:0000255" key="1">
    <source>
        <dbReference type="HAMAP-Rule" id="MF_00200"/>
    </source>
</evidence>
<protein>
    <recommendedName>
        <fullName evidence="1">RNA 3'-terminal phosphate cyclase</fullName>
        <shortName evidence="1">RNA cyclase</shortName>
        <shortName evidence="1">RNA-3'-phosphate cyclase</shortName>
        <ecNumber evidence="1">6.5.1.4</ecNumber>
    </recommendedName>
</protein>
<gene>
    <name evidence="1" type="primary">rtcA</name>
    <name type="ordered locus">PA14_60670</name>
</gene>
<name>RTCA_PSEAB</name>
<comment type="function">
    <text evidence="1">Catalyzes the conversion of 3'-phosphate to a 2',3'-cyclic phosphodiester at the end of RNA. The mechanism of action of the enzyme occurs in 3 steps: (A) adenylation of the enzyme by ATP; (B) transfer of adenylate to an RNA-N3'P to produce RNA-N3'PP5'A; (C) and attack of the adjacent 2'-hydroxyl on the 3'-phosphorus in the diester linkage to produce the cyclic end product. The biological role of this enzyme is unknown but it is likely to function in some aspects of cellular RNA processing.</text>
</comment>
<comment type="catalytic activity">
    <reaction evidence="1">
        <text>a 3'-end 3'-phospho-ribonucleotide-RNA + ATP = a 3'-end 2',3'-cyclophospho-ribonucleotide-RNA + AMP + diphosphate</text>
        <dbReference type="Rhea" id="RHEA:23976"/>
        <dbReference type="Rhea" id="RHEA-COMP:10463"/>
        <dbReference type="Rhea" id="RHEA-COMP:10464"/>
        <dbReference type="ChEBI" id="CHEBI:30616"/>
        <dbReference type="ChEBI" id="CHEBI:33019"/>
        <dbReference type="ChEBI" id="CHEBI:83062"/>
        <dbReference type="ChEBI" id="CHEBI:83064"/>
        <dbReference type="ChEBI" id="CHEBI:456215"/>
        <dbReference type="EC" id="6.5.1.4"/>
    </reaction>
</comment>
<comment type="subcellular location">
    <subcellularLocation>
        <location evidence="1">Cytoplasm</location>
    </subcellularLocation>
</comment>
<comment type="similarity">
    <text evidence="1">Belongs to the RNA 3'-terminal cyclase family. Type 1 subfamily.</text>
</comment>
<sequence>MRKDLIELDGSEGGGQILRSALSLSMTSGQPLRIRNIRGRRSRPGLLRQHLTAVRAAAEICAAEVEGAELGSRELAFRPGAIRAGDYAFAIGSAGSCSLVLQTLLPALLAANGESRVRISGGTHNPLAPPADFLRDSWLPLLQRMGAEVDLELLRHGFVPAGGGELLARVRPARWRPLQLEHPGAALRRQARALLAGIPGHVGERELERVRQRLGWSDEERQLEFLAEDQGPGNALLLRIDCEHICATFCAFGQAGVSAERVAEQVATQAIGWMESGCAADEHLADQLLLPMALAGAGSFTTPRLSAHLQSNRRVIERFLPVRIGDQALDGGGHRIVITSA</sequence>
<keyword id="KW-0067">ATP-binding</keyword>
<keyword id="KW-0963">Cytoplasm</keyword>
<keyword id="KW-0436">Ligase</keyword>
<keyword id="KW-0547">Nucleotide-binding</keyword>
<dbReference type="EC" id="6.5.1.4" evidence="1"/>
<dbReference type="EMBL" id="CP000438">
    <property type="protein sequence ID" value="ABJ13963.1"/>
    <property type="molecule type" value="Genomic_DNA"/>
</dbReference>
<dbReference type="RefSeq" id="WP_003112809.1">
    <property type="nucleotide sequence ID" value="NZ_CP034244.1"/>
</dbReference>
<dbReference type="SMR" id="Q02G92"/>
<dbReference type="KEGG" id="pau:PA14_60670"/>
<dbReference type="PseudoCAP" id="PA14_60670"/>
<dbReference type="HOGENOM" id="CLU_027882_0_0_6"/>
<dbReference type="BioCyc" id="PAER208963:G1G74-5130-MONOMER"/>
<dbReference type="Proteomes" id="UP000000653">
    <property type="component" value="Chromosome"/>
</dbReference>
<dbReference type="GO" id="GO:0005737">
    <property type="term" value="C:cytoplasm"/>
    <property type="evidence" value="ECO:0007669"/>
    <property type="project" value="UniProtKB-SubCell"/>
</dbReference>
<dbReference type="GO" id="GO:0005524">
    <property type="term" value="F:ATP binding"/>
    <property type="evidence" value="ECO:0007669"/>
    <property type="project" value="UniProtKB-KW"/>
</dbReference>
<dbReference type="GO" id="GO:0003963">
    <property type="term" value="F:RNA-3'-phosphate cyclase activity"/>
    <property type="evidence" value="ECO:0007669"/>
    <property type="project" value="UniProtKB-UniRule"/>
</dbReference>
<dbReference type="GO" id="GO:0006396">
    <property type="term" value="P:RNA processing"/>
    <property type="evidence" value="ECO:0007669"/>
    <property type="project" value="InterPro"/>
</dbReference>
<dbReference type="CDD" id="cd00874">
    <property type="entry name" value="RNA_Cyclase_Class_II"/>
    <property type="match status" value="1"/>
</dbReference>
<dbReference type="FunFam" id="3.30.360.20:FF:000003">
    <property type="entry name" value="RNA 3'-terminal phosphate cyclase"/>
    <property type="match status" value="1"/>
</dbReference>
<dbReference type="Gene3D" id="3.65.10.20">
    <property type="entry name" value="RNA 3'-terminal phosphate cyclase domain"/>
    <property type="match status" value="1"/>
</dbReference>
<dbReference type="Gene3D" id="3.30.360.20">
    <property type="entry name" value="RNA 3'-terminal phosphate cyclase, insert domain"/>
    <property type="match status" value="1"/>
</dbReference>
<dbReference type="HAMAP" id="MF_00200">
    <property type="entry name" value="RTC"/>
    <property type="match status" value="1"/>
</dbReference>
<dbReference type="InterPro" id="IPR013791">
    <property type="entry name" value="RNA3'-term_phos_cycl_insert"/>
</dbReference>
<dbReference type="InterPro" id="IPR023797">
    <property type="entry name" value="RNA3'_phos_cyclase_dom"/>
</dbReference>
<dbReference type="InterPro" id="IPR037136">
    <property type="entry name" value="RNA3'_phos_cyclase_dom_sf"/>
</dbReference>
<dbReference type="InterPro" id="IPR000228">
    <property type="entry name" value="RNA3'_term_phos_cyc"/>
</dbReference>
<dbReference type="InterPro" id="IPR017770">
    <property type="entry name" value="RNA3'_term_phos_cyc_type_1"/>
</dbReference>
<dbReference type="InterPro" id="IPR020719">
    <property type="entry name" value="RNA3'_term_phos_cycl-like_CS"/>
</dbReference>
<dbReference type="InterPro" id="IPR013792">
    <property type="entry name" value="RNA3'P_cycl/enolpyr_Trfase_a/b"/>
</dbReference>
<dbReference type="InterPro" id="IPR036553">
    <property type="entry name" value="RPTC_insert"/>
</dbReference>
<dbReference type="NCBIfam" id="NF003246">
    <property type="entry name" value="PRK04204.1-2"/>
    <property type="match status" value="1"/>
</dbReference>
<dbReference type="NCBIfam" id="NF003247">
    <property type="entry name" value="PRK04204.1-3"/>
    <property type="match status" value="1"/>
</dbReference>
<dbReference type="NCBIfam" id="TIGR03399">
    <property type="entry name" value="RNA_3prim_cycl"/>
    <property type="match status" value="1"/>
</dbReference>
<dbReference type="PANTHER" id="PTHR11096">
    <property type="entry name" value="RNA 3' TERMINAL PHOSPHATE CYCLASE"/>
    <property type="match status" value="1"/>
</dbReference>
<dbReference type="PANTHER" id="PTHR11096:SF0">
    <property type="entry name" value="RNA 3'-TERMINAL PHOSPHATE CYCLASE"/>
    <property type="match status" value="1"/>
</dbReference>
<dbReference type="Pfam" id="PF01137">
    <property type="entry name" value="RTC"/>
    <property type="match status" value="1"/>
</dbReference>
<dbReference type="Pfam" id="PF05189">
    <property type="entry name" value="RTC_insert"/>
    <property type="match status" value="1"/>
</dbReference>
<dbReference type="PIRSF" id="PIRSF005378">
    <property type="entry name" value="RNA3'_term_phos_cycl_euk"/>
    <property type="match status" value="1"/>
</dbReference>
<dbReference type="SUPFAM" id="SSF55205">
    <property type="entry name" value="EPT/RTPC-like"/>
    <property type="match status" value="2"/>
</dbReference>
<dbReference type="SUPFAM" id="SSF52913">
    <property type="entry name" value="RNA 3'-terminal phosphate cyclase, RPTC, insert domain"/>
    <property type="match status" value="1"/>
</dbReference>
<dbReference type="PROSITE" id="PS01287">
    <property type="entry name" value="RTC"/>
    <property type="match status" value="1"/>
</dbReference>
<organism>
    <name type="scientific">Pseudomonas aeruginosa (strain UCBPP-PA14)</name>
    <dbReference type="NCBI Taxonomy" id="208963"/>
    <lineage>
        <taxon>Bacteria</taxon>
        <taxon>Pseudomonadati</taxon>
        <taxon>Pseudomonadota</taxon>
        <taxon>Gammaproteobacteria</taxon>
        <taxon>Pseudomonadales</taxon>
        <taxon>Pseudomonadaceae</taxon>
        <taxon>Pseudomonas</taxon>
    </lineage>
</organism>
<accession>Q02G92</accession>
<feature type="chain" id="PRO_1000012113" description="RNA 3'-terminal phosphate cyclase">
    <location>
        <begin position="1"/>
        <end position="341"/>
    </location>
</feature>
<feature type="active site" description="Tele-AMP-histidine intermediate" evidence="1">
    <location>
        <position position="308"/>
    </location>
</feature>
<feature type="binding site" evidence="1">
    <location>
        <position position="102"/>
    </location>
    <ligand>
        <name>ATP</name>
        <dbReference type="ChEBI" id="CHEBI:30616"/>
    </ligand>
</feature>
<feature type="binding site" evidence="1">
    <location>
        <begin position="283"/>
        <end position="287"/>
    </location>
    <ligand>
        <name>ATP</name>
        <dbReference type="ChEBI" id="CHEBI:30616"/>
    </ligand>
</feature>
<proteinExistence type="inferred from homology"/>